<evidence type="ECO:0000255" key="1">
    <source>
        <dbReference type="HAMAP-Rule" id="MF_00232"/>
    </source>
</evidence>
<dbReference type="EMBL" id="CP000561">
    <property type="protein sequence ID" value="ABO08261.1"/>
    <property type="molecule type" value="Genomic_DNA"/>
</dbReference>
<dbReference type="RefSeq" id="WP_011849519.1">
    <property type="nucleotide sequence ID" value="NC_009073.1"/>
</dbReference>
<dbReference type="SMR" id="A3MUE4"/>
<dbReference type="STRING" id="410359.Pcal_0835"/>
<dbReference type="GeneID" id="4908898"/>
<dbReference type="KEGG" id="pcl:Pcal_0835"/>
<dbReference type="eggNOG" id="arCOG01640">
    <property type="taxonomic scope" value="Archaea"/>
</dbReference>
<dbReference type="HOGENOM" id="CLU_026663_3_1_2"/>
<dbReference type="OrthoDB" id="38099at2157"/>
<dbReference type="Proteomes" id="UP000001431">
    <property type="component" value="Chromosome"/>
</dbReference>
<dbReference type="GO" id="GO:0003743">
    <property type="term" value="F:translation initiation factor activity"/>
    <property type="evidence" value="ECO:0007669"/>
    <property type="project" value="UniProtKB-UniRule"/>
</dbReference>
<dbReference type="Gene3D" id="3.30.30.170">
    <property type="match status" value="1"/>
</dbReference>
<dbReference type="HAMAP" id="MF_00232">
    <property type="entry name" value="eIF_2_beta"/>
    <property type="match status" value="1"/>
</dbReference>
<dbReference type="InterPro" id="IPR045196">
    <property type="entry name" value="IF2/IF5"/>
</dbReference>
<dbReference type="InterPro" id="IPR004458">
    <property type="entry name" value="TIF2_bsu_arc"/>
</dbReference>
<dbReference type="InterPro" id="IPR002735">
    <property type="entry name" value="Transl_init_fac_IF2/IF5_dom"/>
</dbReference>
<dbReference type="InterPro" id="IPR016189">
    <property type="entry name" value="Transl_init_fac_IF2/IF5_N"/>
</dbReference>
<dbReference type="InterPro" id="IPR016190">
    <property type="entry name" value="Transl_init_fac_IF2/IF5_Zn-bd"/>
</dbReference>
<dbReference type="NCBIfam" id="NF003067">
    <property type="entry name" value="PRK03988.1"/>
    <property type="match status" value="1"/>
</dbReference>
<dbReference type="PANTHER" id="PTHR23001">
    <property type="entry name" value="EUKARYOTIC TRANSLATION INITIATION FACTOR"/>
    <property type="match status" value="1"/>
</dbReference>
<dbReference type="PANTHER" id="PTHR23001:SF3">
    <property type="entry name" value="EUKARYOTIC TRANSLATION INITIATION FACTOR 2 SUBUNIT 2"/>
    <property type="match status" value="1"/>
</dbReference>
<dbReference type="Pfam" id="PF01873">
    <property type="entry name" value="eIF-5_eIF-2B"/>
    <property type="match status" value="1"/>
</dbReference>
<dbReference type="SMART" id="SM00653">
    <property type="entry name" value="eIF2B_5"/>
    <property type="match status" value="1"/>
</dbReference>
<dbReference type="SUPFAM" id="SSF100966">
    <property type="entry name" value="Translation initiation factor 2 beta, aIF2beta, N-terminal domain"/>
    <property type="match status" value="1"/>
</dbReference>
<dbReference type="SUPFAM" id="SSF75689">
    <property type="entry name" value="Zinc-binding domain of translation initiation factor 2 beta"/>
    <property type="match status" value="1"/>
</dbReference>
<protein>
    <recommendedName>
        <fullName evidence="1">Translation initiation factor 2 subunit beta</fullName>
    </recommendedName>
    <alternativeName>
        <fullName evidence="1">aIF2-beta</fullName>
    </alternativeName>
    <alternativeName>
        <fullName evidence="1">eIF-2-beta</fullName>
    </alternativeName>
</protein>
<reference key="1">
    <citation type="submission" date="2007-02" db="EMBL/GenBank/DDBJ databases">
        <title>Complete sequence of Pyrobaculum calidifontis JCM 11548.</title>
        <authorList>
            <consortium name="US DOE Joint Genome Institute"/>
            <person name="Copeland A."/>
            <person name="Lucas S."/>
            <person name="Lapidus A."/>
            <person name="Barry K."/>
            <person name="Glavina del Rio T."/>
            <person name="Dalin E."/>
            <person name="Tice H."/>
            <person name="Pitluck S."/>
            <person name="Chain P."/>
            <person name="Malfatti S."/>
            <person name="Shin M."/>
            <person name="Vergez L."/>
            <person name="Schmutz J."/>
            <person name="Larimer F."/>
            <person name="Land M."/>
            <person name="Hauser L."/>
            <person name="Kyrpides N."/>
            <person name="Mikhailova N."/>
            <person name="Cozen A.E."/>
            <person name="Fitz-Gibbon S.T."/>
            <person name="House C.H."/>
            <person name="Saltikov C."/>
            <person name="Lowe T.M."/>
            <person name="Richardson P."/>
        </authorList>
    </citation>
    <scope>NUCLEOTIDE SEQUENCE [LARGE SCALE GENOMIC DNA]</scope>
    <source>
        <strain>DSM 21063 / JCM 11548 / VA1</strain>
    </source>
</reference>
<feature type="chain" id="PRO_1000021658" description="Translation initiation factor 2 subunit beta">
    <location>
        <begin position="1"/>
        <end position="134"/>
    </location>
</feature>
<organism>
    <name type="scientific">Pyrobaculum calidifontis (strain DSM 21063 / JCM 11548 / VA1)</name>
    <dbReference type="NCBI Taxonomy" id="410359"/>
    <lineage>
        <taxon>Archaea</taxon>
        <taxon>Thermoproteota</taxon>
        <taxon>Thermoprotei</taxon>
        <taxon>Thermoproteales</taxon>
        <taxon>Thermoproteaceae</taxon>
        <taxon>Pyrobaculum</taxon>
    </lineage>
</organism>
<sequence>MDDEYLALLDRAYKLVSPKAQRRAEIPKIEVVNMPRKTIIQNFGAIAKRLNRDVYLMAKFFQKELAVPGTVEGDVFTLHGEKSPKVVEAVYERFIKYYVVCPVCNSIDTELRREGRIFVLHCLACGASTPVRPL</sequence>
<proteinExistence type="inferred from homology"/>
<keyword id="KW-0396">Initiation factor</keyword>
<keyword id="KW-0648">Protein biosynthesis</keyword>
<gene>
    <name evidence="1" type="primary">eif2b</name>
    <name type="ordered locus">Pcal_0835</name>
</gene>
<accession>A3MUE4</accession>
<comment type="function">
    <text evidence="1">eIF-2 functions in the early steps of protein synthesis by forming a ternary complex with GTP and initiator tRNA.</text>
</comment>
<comment type="subunit">
    <text evidence="1">Heterotrimer composed of an alpha, a beta and a gamma chain.</text>
</comment>
<comment type="similarity">
    <text evidence="1">Belongs to the eIF-2-beta/eIF-5 family.</text>
</comment>
<name>IF2B_PYRCJ</name>